<comment type="catalytic activity">
    <reaction evidence="1">
        <text>2-(N(omega)-L-arginino)succinate = fumarate + L-arginine</text>
        <dbReference type="Rhea" id="RHEA:24020"/>
        <dbReference type="ChEBI" id="CHEBI:29806"/>
        <dbReference type="ChEBI" id="CHEBI:32682"/>
        <dbReference type="ChEBI" id="CHEBI:57472"/>
        <dbReference type="EC" id="4.3.2.1"/>
    </reaction>
</comment>
<comment type="pathway">
    <text evidence="1">Amino-acid biosynthesis; L-arginine biosynthesis; L-arginine from L-ornithine and carbamoyl phosphate: step 3/3.</text>
</comment>
<comment type="subcellular location">
    <subcellularLocation>
        <location evidence="1">Cytoplasm</location>
    </subcellularLocation>
</comment>
<comment type="similarity">
    <text evidence="1">Belongs to the lyase 1 family. Argininosuccinate lyase subfamily.</text>
</comment>
<reference key="1">
    <citation type="journal article" date="2008" name="BMC Genomics">
        <title>Genome sequence and rapid evolution of the rice pathogen Xanthomonas oryzae pv. oryzae PXO99A.</title>
        <authorList>
            <person name="Salzberg S.L."/>
            <person name="Sommer D.D."/>
            <person name="Schatz M.C."/>
            <person name="Phillippy A.M."/>
            <person name="Rabinowicz P.D."/>
            <person name="Tsuge S."/>
            <person name="Furutani A."/>
            <person name="Ochiai H."/>
            <person name="Delcher A.L."/>
            <person name="Kelley D."/>
            <person name="Madupu R."/>
            <person name="Puiu D."/>
            <person name="Radune D."/>
            <person name="Shumway M."/>
            <person name="Trapnell C."/>
            <person name="Aparna G."/>
            <person name="Jha G."/>
            <person name="Pandey A."/>
            <person name="Patil P.B."/>
            <person name="Ishihara H."/>
            <person name="Meyer D.F."/>
            <person name="Szurek B."/>
            <person name="Verdier V."/>
            <person name="Koebnik R."/>
            <person name="Dow J.M."/>
            <person name="Ryan R.P."/>
            <person name="Hirata H."/>
            <person name="Tsuyumu S."/>
            <person name="Won Lee S."/>
            <person name="Seo Y.-S."/>
            <person name="Sriariyanum M."/>
            <person name="Ronald P.C."/>
            <person name="Sonti R.V."/>
            <person name="Van Sluys M.-A."/>
            <person name="Leach J.E."/>
            <person name="White F.F."/>
            <person name="Bogdanove A.J."/>
        </authorList>
    </citation>
    <scope>NUCLEOTIDE SEQUENCE [LARGE SCALE GENOMIC DNA]</scope>
    <source>
        <strain>PXO99A</strain>
    </source>
</reference>
<accession>B2SHW2</accession>
<gene>
    <name evidence="1" type="primary">argH</name>
    <name type="ordered locus">PXO_00346</name>
</gene>
<dbReference type="EC" id="4.3.2.1" evidence="1"/>
<dbReference type="EMBL" id="CP000967">
    <property type="protein sequence ID" value="ACD58622.1"/>
    <property type="molecule type" value="Genomic_DNA"/>
</dbReference>
<dbReference type="RefSeq" id="WP_011408717.1">
    <property type="nucleotide sequence ID" value="NC_010717.2"/>
</dbReference>
<dbReference type="SMR" id="B2SHW2"/>
<dbReference type="KEGG" id="xop:PXO_00346"/>
<dbReference type="eggNOG" id="COG0165">
    <property type="taxonomic scope" value="Bacteria"/>
</dbReference>
<dbReference type="HOGENOM" id="CLU_027272_2_0_6"/>
<dbReference type="UniPathway" id="UPA00068">
    <property type="reaction ID" value="UER00114"/>
</dbReference>
<dbReference type="PHI-base" id="PHI:9985"/>
<dbReference type="Proteomes" id="UP000001740">
    <property type="component" value="Chromosome"/>
</dbReference>
<dbReference type="GO" id="GO:0005829">
    <property type="term" value="C:cytosol"/>
    <property type="evidence" value="ECO:0007669"/>
    <property type="project" value="TreeGrafter"/>
</dbReference>
<dbReference type="GO" id="GO:0004056">
    <property type="term" value="F:argininosuccinate lyase activity"/>
    <property type="evidence" value="ECO:0007669"/>
    <property type="project" value="UniProtKB-UniRule"/>
</dbReference>
<dbReference type="GO" id="GO:0042450">
    <property type="term" value="P:arginine biosynthetic process via ornithine"/>
    <property type="evidence" value="ECO:0007669"/>
    <property type="project" value="InterPro"/>
</dbReference>
<dbReference type="GO" id="GO:0006526">
    <property type="term" value="P:L-arginine biosynthetic process"/>
    <property type="evidence" value="ECO:0007669"/>
    <property type="project" value="UniProtKB-UniRule"/>
</dbReference>
<dbReference type="CDD" id="cd01359">
    <property type="entry name" value="Argininosuccinate_lyase"/>
    <property type="match status" value="1"/>
</dbReference>
<dbReference type="Gene3D" id="1.10.40.30">
    <property type="entry name" value="Fumarase/aspartase (C-terminal domain)"/>
    <property type="match status" value="1"/>
</dbReference>
<dbReference type="Gene3D" id="1.20.200.10">
    <property type="entry name" value="Fumarase/aspartase (Central domain)"/>
    <property type="match status" value="1"/>
</dbReference>
<dbReference type="Gene3D" id="1.10.275.10">
    <property type="entry name" value="Fumarase/aspartase (N-terminal domain)"/>
    <property type="match status" value="1"/>
</dbReference>
<dbReference type="HAMAP" id="MF_00006">
    <property type="entry name" value="Arg_succ_lyase"/>
    <property type="match status" value="1"/>
</dbReference>
<dbReference type="InterPro" id="IPR009049">
    <property type="entry name" value="Argininosuccinate_lyase"/>
</dbReference>
<dbReference type="InterPro" id="IPR024083">
    <property type="entry name" value="Fumarase/histidase_N"/>
</dbReference>
<dbReference type="InterPro" id="IPR020557">
    <property type="entry name" value="Fumarate_lyase_CS"/>
</dbReference>
<dbReference type="InterPro" id="IPR000362">
    <property type="entry name" value="Fumarate_lyase_fam"/>
</dbReference>
<dbReference type="InterPro" id="IPR022761">
    <property type="entry name" value="Fumarate_lyase_N"/>
</dbReference>
<dbReference type="InterPro" id="IPR008948">
    <property type="entry name" value="L-Aspartase-like"/>
</dbReference>
<dbReference type="PANTHER" id="PTHR43814">
    <property type="entry name" value="ARGININOSUCCINATE LYASE"/>
    <property type="match status" value="1"/>
</dbReference>
<dbReference type="PANTHER" id="PTHR43814:SF1">
    <property type="entry name" value="ARGININOSUCCINATE LYASE"/>
    <property type="match status" value="1"/>
</dbReference>
<dbReference type="Pfam" id="PF00206">
    <property type="entry name" value="Lyase_1"/>
    <property type="match status" value="1"/>
</dbReference>
<dbReference type="PRINTS" id="PR00145">
    <property type="entry name" value="ARGSUCLYASE"/>
</dbReference>
<dbReference type="PRINTS" id="PR00149">
    <property type="entry name" value="FUMRATELYASE"/>
</dbReference>
<dbReference type="SUPFAM" id="SSF48557">
    <property type="entry name" value="L-aspartase-like"/>
    <property type="match status" value="1"/>
</dbReference>
<dbReference type="PROSITE" id="PS00163">
    <property type="entry name" value="FUMARATE_LYASES"/>
    <property type="match status" value="1"/>
</dbReference>
<name>ARLY_XANOP</name>
<proteinExistence type="inferred from homology"/>
<feature type="chain" id="PRO_1000089131" description="Argininosuccinate lyase">
    <location>
        <begin position="1"/>
        <end position="431"/>
    </location>
</feature>
<protein>
    <recommendedName>
        <fullName evidence="1">Argininosuccinate lyase</fullName>
        <shortName evidence="1">ASAL</shortName>
        <ecNumber evidence="1">4.3.2.1</ecNumber>
    </recommendedName>
    <alternativeName>
        <fullName evidence="1">Arginosuccinase</fullName>
    </alternativeName>
</protein>
<keyword id="KW-0028">Amino-acid biosynthesis</keyword>
<keyword id="KW-0055">Arginine biosynthesis</keyword>
<keyword id="KW-0963">Cytoplasm</keyword>
<keyword id="KW-0456">Lyase</keyword>
<organism>
    <name type="scientific">Xanthomonas oryzae pv. oryzae (strain PXO99A)</name>
    <dbReference type="NCBI Taxonomy" id="360094"/>
    <lineage>
        <taxon>Bacteria</taxon>
        <taxon>Pseudomonadati</taxon>
        <taxon>Pseudomonadota</taxon>
        <taxon>Gammaproteobacteria</taxon>
        <taxon>Lysobacterales</taxon>
        <taxon>Lysobacteraceae</taxon>
        <taxon>Xanthomonas</taxon>
    </lineage>
</organism>
<sequence length="431" mass="46462">MTNLLWQKPGVAVDAKIQSFLAGDDVILDREFFLHDIAASKAHAQGLQHIGILSPQELDGLSEQLDLLAEDFRGGAFVLDEQYEDCHSAIEARLTERLGDAGRKIHTGRSRNDQILVATRLWLKDKLQRVATLSAEIAKVALDRAQAEAELPVPGYTHIQRAVVSSAGMWWAGWAEAFIDNAVRATDTLQLVDSNPLGTAAGYGVNLPLDRAHTTAELGFARLQVSPIYAQLSRGKYELAALEALGSATLDLRRIAWDVSLFTSGEFAFVALPAQYTTGSSIMPNKRNPDVIELMRATHASVAAARTEIEQLLSLPSGYHRDLQSSKGAIVHGFGRGLAALELLPALLANLEWRPDKLRAAIDSGMYATDVAVEAAVAGVPFREAYKAAAEASDTAGQGRTPEGSLAARVSPGAAADLQLDVLLARWETLR</sequence>
<evidence type="ECO:0000255" key="1">
    <source>
        <dbReference type="HAMAP-Rule" id="MF_00006"/>
    </source>
</evidence>